<comment type="function">
    <text evidence="1">Major role in the synthesis of nucleoside triphosphates other than ATP. The ATP gamma phosphate is transferred to the NDP beta phosphate via a ping-pong mechanism, using a phosphorylated active-site intermediate.</text>
</comment>
<comment type="catalytic activity">
    <reaction evidence="1">
        <text>a 2'-deoxyribonucleoside 5'-diphosphate + ATP = a 2'-deoxyribonucleoside 5'-triphosphate + ADP</text>
        <dbReference type="Rhea" id="RHEA:44640"/>
        <dbReference type="ChEBI" id="CHEBI:30616"/>
        <dbReference type="ChEBI" id="CHEBI:61560"/>
        <dbReference type="ChEBI" id="CHEBI:73316"/>
        <dbReference type="ChEBI" id="CHEBI:456216"/>
        <dbReference type="EC" id="2.7.4.6"/>
    </reaction>
</comment>
<comment type="catalytic activity">
    <reaction evidence="1">
        <text>a ribonucleoside 5'-diphosphate + ATP = a ribonucleoside 5'-triphosphate + ADP</text>
        <dbReference type="Rhea" id="RHEA:18113"/>
        <dbReference type="ChEBI" id="CHEBI:30616"/>
        <dbReference type="ChEBI" id="CHEBI:57930"/>
        <dbReference type="ChEBI" id="CHEBI:61557"/>
        <dbReference type="ChEBI" id="CHEBI:456216"/>
        <dbReference type="EC" id="2.7.4.6"/>
    </reaction>
</comment>
<comment type="cofactor">
    <cofactor evidence="1">
        <name>Mg(2+)</name>
        <dbReference type="ChEBI" id="CHEBI:18420"/>
    </cofactor>
</comment>
<comment type="subunit">
    <text evidence="1">Homotetramer.</text>
</comment>
<comment type="subcellular location">
    <subcellularLocation>
        <location evidence="1">Cytoplasm</location>
    </subcellularLocation>
</comment>
<comment type="similarity">
    <text evidence="1 2">Belongs to the NDK family.</text>
</comment>
<sequence length="140" mass="15254">MAIQRTFSIIKPDATKRNLTGAINAKLEAAGLRIVAQKRIHLSKAQAAVFYAVHKERPFYDELCEFMASEPIVVQVLEGEDAIAKNREVMGATNPAEAAEGTIRKEFALSIGENSVHGSDAEDTAKEEIAYFFSGLELVG</sequence>
<evidence type="ECO:0000255" key="1">
    <source>
        <dbReference type="HAMAP-Rule" id="MF_00451"/>
    </source>
</evidence>
<evidence type="ECO:0000305" key="2"/>
<protein>
    <recommendedName>
        <fullName evidence="1">Nucleoside diphosphate kinase</fullName>
        <shortName evidence="1">NDK</shortName>
        <shortName evidence="1">NDP kinase</shortName>
        <ecNumber evidence="1">2.7.4.6</ecNumber>
    </recommendedName>
    <alternativeName>
        <fullName evidence="1">Nucleoside-2-P kinase</fullName>
    </alternativeName>
</protein>
<organism>
    <name type="scientific">Rhodovulum sulfidophilum</name>
    <name type="common">Rhodobacter sulfidophilus</name>
    <dbReference type="NCBI Taxonomy" id="35806"/>
    <lineage>
        <taxon>Bacteria</taxon>
        <taxon>Pseudomonadati</taxon>
        <taxon>Pseudomonadota</taxon>
        <taxon>Alphaproteobacteria</taxon>
        <taxon>Rhodobacterales</taxon>
        <taxon>Paracoccaceae</taxon>
        <taxon>Rhodovulum</taxon>
    </lineage>
</organism>
<reference key="1">
    <citation type="submission" date="1996-12" db="EMBL/GenBank/DDBJ databases">
        <authorList>
            <person name="Hagemann G.E."/>
            <person name="Tadros M.H."/>
        </authorList>
    </citation>
    <scope>NUCLEOTIDE SEQUENCE [GENOMIC DNA]</scope>
    <source>
        <strain>W4</strain>
    </source>
</reference>
<feature type="chain" id="PRO_0000137032" description="Nucleoside diphosphate kinase">
    <location>
        <begin position="1"/>
        <end position="140"/>
    </location>
</feature>
<feature type="active site" description="Pros-phosphohistidine intermediate" evidence="1">
    <location>
        <position position="117"/>
    </location>
</feature>
<feature type="binding site" evidence="1">
    <location>
        <position position="11"/>
    </location>
    <ligand>
        <name>ATP</name>
        <dbReference type="ChEBI" id="CHEBI:30616"/>
    </ligand>
</feature>
<feature type="binding site" evidence="1">
    <location>
        <position position="59"/>
    </location>
    <ligand>
        <name>ATP</name>
        <dbReference type="ChEBI" id="CHEBI:30616"/>
    </ligand>
</feature>
<feature type="binding site" evidence="1">
    <location>
        <position position="87"/>
    </location>
    <ligand>
        <name>ATP</name>
        <dbReference type="ChEBI" id="CHEBI:30616"/>
    </ligand>
</feature>
<feature type="binding site" evidence="1">
    <location>
        <position position="93"/>
    </location>
    <ligand>
        <name>ATP</name>
        <dbReference type="ChEBI" id="CHEBI:30616"/>
    </ligand>
</feature>
<feature type="binding site" evidence="1">
    <location>
        <position position="104"/>
    </location>
    <ligand>
        <name>ATP</name>
        <dbReference type="ChEBI" id="CHEBI:30616"/>
    </ligand>
</feature>
<feature type="binding site" evidence="1">
    <location>
        <position position="114"/>
    </location>
    <ligand>
        <name>ATP</name>
        <dbReference type="ChEBI" id="CHEBI:30616"/>
    </ligand>
</feature>
<dbReference type="EC" id="2.7.4.6" evidence="1"/>
<dbReference type="EMBL" id="U81968">
    <property type="protein sequence ID" value="AAB59005.1"/>
    <property type="molecule type" value="Genomic_DNA"/>
</dbReference>
<dbReference type="SMR" id="P95653"/>
<dbReference type="STRING" id="35806.A6024_09280"/>
<dbReference type="eggNOG" id="COG0105">
    <property type="taxonomic scope" value="Bacteria"/>
</dbReference>
<dbReference type="GO" id="GO:0005737">
    <property type="term" value="C:cytoplasm"/>
    <property type="evidence" value="ECO:0007669"/>
    <property type="project" value="UniProtKB-SubCell"/>
</dbReference>
<dbReference type="GO" id="GO:0005524">
    <property type="term" value="F:ATP binding"/>
    <property type="evidence" value="ECO:0007669"/>
    <property type="project" value="UniProtKB-UniRule"/>
</dbReference>
<dbReference type="GO" id="GO:0046872">
    <property type="term" value="F:metal ion binding"/>
    <property type="evidence" value="ECO:0007669"/>
    <property type="project" value="UniProtKB-KW"/>
</dbReference>
<dbReference type="GO" id="GO:0004550">
    <property type="term" value="F:nucleoside diphosphate kinase activity"/>
    <property type="evidence" value="ECO:0007669"/>
    <property type="project" value="UniProtKB-UniRule"/>
</dbReference>
<dbReference type="GO" id="GO:0006241">
    <property type="term" value="P:CTP biosynthetic process"/>
    <property type="evidence" value="ECO:0007669"/>
    <property type="project" value="UniProtKB-UniRule"/>
</dbReference>
<dbReference type="GO" id="GO:0006183">
    <property type="term" value="P:GTP biosynthetic process"/>
    <property type="evidence" value="ECO:0007669"/>
    <property type="project" value="UniProtKB-UniRule"/>
</dbReference>
<dbReference type="GO" id="GO:0006228">
    <property type="term" value="P:UTP biosynthetic process"/>
    <property type="evidence" value="ECO:0007669"/>
    <property type="project" value="UniProtKB-UniRule"/>
</dbReference>
<dbReference type="CDD" id="cd04413">
    <property type="entry name" value="NDPk_I"/>
    <property type="match status" value="1"/>
</dbReference>
<dbReference type="FunFam" id="3.30.70.141:FF:000001">
    <property type="entry name" value="Nucleoside diphosphate kinase"/>
    <property type="match status" value="1"/>
</dbReference>
<dbReference type="Gene3D" id="3.30.70.141">
    <property type="entry name" value="Nucleoside diphosphate kinase-like domain"/>
    <property type="match status" value="1"/>
</dbReference>
<dbReference type="HAMAP" id="MF_00451">
    <property type="entry name" value="NDP_kinase"/>
    <property type="match status" value="1"/>
</dbReference>
<dbReference type="InterPro" id="IPR034907">
    <property type="entry name" value="NDK-like_dom"/>
</dbReference>
<dbReference type="InterPro" id="IPR036850">
    <property type="entry name" value="NDK-like_dom_sf"/>
</dbReference>
<dbReference type="InterPro" id="IPR001564">
    <property type="entry name" value="Nucleoside_diP_kinase"/>
</dbReference>
<dbReference type="InterPro" id="IPR023005">
    <property type="entry name" value="Nucleoside_diP_kinase_AS"/>
</dbReference>
<dbReference type="NCBIfam" id="NF001908">
    <property type="entry name" value="PRK00668.1"/>
    <property type="match status" value="1"/>
</dbReference>
<dbReference type="PANTHER" id="PTHR46161">
    <property type="entry name" value="NUCLEOSIDE DIPHOSPHATE KINASE"/>
    <property type="match status" value="1"/>
</dbReference>
<dbReference type="PANTHER" id="PTHR46161:SF3">
    <property type="entry name" value="NUCLEOSIDE DIPHOSPHATE KINASE DDB_G0292928-RELATED"/>
    <property type="match status" value="1"/>
</dbReference>
<dbReference type="Pfam" id="PF00334">
    <property type="entry name" value="NDK"/>
    <property type="match status" value="1"/>
</dbReference>
<dbReference type="PRINTS" id="PR01243">
    <property type="entry name" value="NUCDPKINASE"/>
</dbReference>
<dbReference type="SMART" id="SM00562">
    <property type="entry name" value="NDK"/>
    <property type="match status" value="1"/>
</dbReference>
<dbReference type="SUPFAM" id="SSF54919">
    <property type="entry name" value="Nucleoside diphosphate kinase, NDK"/>
    <property type="match status" value="1"/>
</dbReference>
<dbReference type="PROSITE" id="PS00469">
    <property type="entry name" value="NDPK"/>
    <property type="match status" value="1"/>
</dbReference>
<dbReference type="PROSITE" id="PS51374">
    <property type="entry name" value="NDPK_LIKE"/>
    <property type="match status" value="1"/>
</dbReference>
<proteinExistence type="inferred from homology"/>
<keyword id="KW-0067">ATP-binding</keyword>
<keyword id="KW-0963">Cytoplasm</keyword>
<keyword id="KW-0418">Kinase</keyword>
<keyword id="KW-0460">Magnesium</keyword>
<keyword id="KW-0479">Metal-binding</keyword>
<keyword id="KW-0546">Nucleotide metabolism</keyword>
<keyword id="KW-0547">Nucleotide-binding</keyword>
<keyword id="KW-0597">Phosphoprotein</keyword>
<keyword id="KW-0808">Transferase</keyword>
<accession>P95653</accession>
<gene>
    <name evidence="1" type="primary">ndk</name>
</gene>
<name>NDK_RHOSU</name>